<feature type="chain" id="PRO_0000058002" description="Protein numb homolog">
    <location>
        <begin position="1"/>
        <end position="653"/>
    </location>
</feature>
<feature type="domain" description="PID" evidence="4">
    <location>
        <begin position="33"/>
        <end position="193"/>
    </location>
</feature>
<feature type="region of interest" description="Disordered" evidence="5">
    <location>
        <begin position="213"/>
        <end position="260"/>
    </location>
</feature>
<feature type="region of interest" description="Disordered" evidence="5">
    <location>
        <begin position="542"/>
        <end position="590"/>
    </location>
</feature>
<feature type="region of interest" description="Disordered" evidence="5">
    <location>
        <begin position="625"/>
        <end position="653"/>
    </location>
</feature>
<feature type="compositionally biased region" description="Basic and acidic residues" evidence="5">
    <location>
        <begin position="213"/>
        <end position="223"/>
    </location>
</feature>
<feature type="compositionally biased region" description="Polar residues" evidence="5">
    <location>
        <begin position="546"/>
        <end position="576"/>
    </location>
</feature>
<feature type="compositionally biased region" description="Polar residues" evidence="5">
    <location>
        <begin position="632"/>
        <end position="646"/>
    </location>
</feature>
<feature type="modified residue" description="Phosphothreonine" evidence="2">
    <location>
        <position position="102"/>
    </location>
</feature>
<feature type="modified residue" description="Phosphoserine" evidence="2">
    <location>
        <position position="194"/>
    </location>
</feature>
<feature type="modified residue" description="Phosphothreonine" evidence="17">
    <location>
        <position position="243"/>
    </location>
</feature>
<feature type="modified residue" description="Phosphoserine" evidence="17">
    <location>
        <position position="244"/>
    </location>
</feature>
<feature type="modified residue" description="Phosphoserine; by CaMK1" evidence="3">
    <location>
        <position position="276"/>
    </location>
</feature>
<feature type="modified residue" description="Phosphoserine; by CaMK1" evidence="3">
    <location>
        <position position="295"/>
    </location>
</feature>
<feature type="modified residue" description="Phosphoserine" evidence="2">
    <location>
        <position position="427"/>
    </location>
</feature>
<feature type="modified residue" description="Phosphothreonine" evidence="2">
    <location>
        <position position="438"/>
    </location>
</feature>
<feature type="modified residue" description="Phosphoserine" evidence="18">
    <location>
        <position position="440"/>
    </location>
</feature>
<feature type="modified residue" description="Phosphoserine" evidence="2">
    <location>
        <position position="636"/>
    </location>
</feature>
<feature type="splice variant" id="VSP_004350" description="In isoform 3 and isoform 4." evidence="12 13 14 15">
    <location>
        <begin position="68"/>
        <end position="78"/>
    </location>
</feature>
<feature type="splice variant" id="VSP_004351" description="In isoform 2 and isoform 4." evidence="12 13 14 15">
    <location>
        <begin position="367"/>
        <end position="415"/>
    </location>
</feature>
<feature type="sequence conflict" description="In Ref. 4; AAH33459." evidence="16" ref="4">
    <original>V</original>
    <variation>A</variation>
    <location>
        <position position="225"/>
    </location>
</feature>
<feature type="sequence conflict" description="In Ref. 3; BAB23367." evidence="16" ref="3">
    <original>S</original>
    <variation>C</variation>
    <location>
        <position position="362"/>
    </location>
</feature>
<feature type="helix" evidence="19">
    <location>
        <begin position="26"/>
        <end position="31"/>
    </location>
</feature>
<feature type="turn" evidence="19">
    <location>
        <begin position="32"/>
        <end position="35"/>
    </location>
</feature>
<feature type="strand" evidence="19">
    <location>
        <begin position="38"/>
        <end position="48"/>
    </location>
</feature>
<feature type="strand" evidence="19">
    <location>
        <begin position="50"/>
        <end position="52"/>
    </location>
</feature>
<feature type="helix" evidence="19">
    <location>
        <begin position="55"/>
        <end position="67"/>
    </location>
</feature>
<feature type="strand" evidence="19">
    <location>
        <begin position="84"/>
        <end position="91"/>
    </location>
</feature>
<feature type="strand" evidence="19">
    <location>
        <begin position="94"/>
        <end position="98"/>
    </location>
</feature>
<feature type="turn" evidence="19">
    <location>
        <begin position="100"/>
        <end position="102"/>
    </location>
</feature>
<feature type="strand" evidence="19">
    <location>
        <begin position="105"/>
        <end position="107"/>
    </location>
</feature>
<feature type="turn" evidence="19">
    <location>
        <begin position="111"/>
        <end position="113"/>
    </location>
</feature>
<feature type="strand" evidence="19">
    <location>
        <begin position="116"/>
        <end position="118"/>
    </location>
</feature>
<feature type="strand" evidence="19">
    <location>
        <begin position="121"/>
        <end position="132"/>
    </location>
</feature>
<feature type="strand" evidence="19">
    <location>
        <begin position="134"/>
        <end position="149"/>
    </location>
</feature>
<feature type="helix" evidence="19">
    <location>
        <begin position="151"/>
        <end position="169"/>
    </location>
</feature>
<feature type="strand" evidence="20">
    <location>
        <begin position="286"/>
        <end position="288"/>
    </location>
</feature>
<sequence>MNKLRQSFRRKKDVYVPEASRPHQWQTDEEGVRTGKCSFPVKYLGHVEVDESRGMHICEDAVKRLKAERKFFKGFFGKTGKKAVKAVLWVSADGLRVVDEKTKDLIVDQTIEKVSFCAPDRNFDRAFSYICRDGTTRRWICHCFMAVKDTGERLSHAVGCAFAACLERKQKREKECGVTATFDASRTTFTREGSFRVTTATEQAEREEIMKQLQDAKKAETDKTVVGPSVAPGNTAPSPSSPTSPTPDGTASSEMNNPHAIPRRHAPIEQLARQGSFRGFPALSQKMSPFKRQLSLRINELPSTMQRKTDFPIKNTVPEVEGEAESISSLCSQITSAFSTPSEDPFSSAPMTKPVTLVAPQSPVLQANGTDSASHVLTAKPANTALAHVAMPVRETNPWAHVPDAANKEIAAIHPGTEWGQSSGAASPGLFQAGHRRTPSEADRWLEEVSKSVRAQQPQVSAAPLQPVLQPPPPAAIAPPAPPFQGHAFLTSQPVPVGVVPPLQPAFVPTQSYPVANGMPYPASNVPVVGITPSQMVANVFGTAGHPQTTHPHQSPSLAKQQTFPQYETSSATTSPFFKPPAQHLNGSAAFNGVDNGGLASGNRHAEVPPGTCPVDPFEAQWAALESKSKQRTNPSPTNPFSSDLQKTFEIEL</sequence>
<gene>
    <name type="primary">Numb</name>
</gene>
<evidence type="ECO:0000250" key="1"/>
<evidence type="ECO:0000250" key="2">
    <source>
        <dbReference type="UniProtKB" id="P49757"/>
    </source>
</evidence>
<evidence type="ECO:0000250" key="3">
    <source>
        <dbReference type="UniProtKB" id="Q2LC84"/>
    </source>
</evidence>
<evidence type="ECO:0000255" key="4">
    <source>
        <dbReference type="PROSITE-ProRule" id="PRU00148"/>
    </source>
</evidence>
<evidence type="ECO:0000256" key="5">
    <source>
        <dbReference type="SAM" id="MobiDB-lite"/>
    </source>
</evidence>
<evidence type="ECO:0000269" key="6">
    <source>
    </source>
</evidence>
<evidence type="ECO:0000269" key="7">
    <source>
    </source>
</evidence>
<evidence type="ECO:0000269" key="8">
    <source>
    </source>
</evidence>
<evidence type="ECO:0000269" key="9">
    <source>
    </source>
</evidence>
<evidence type="ECO:0000269" key="10">
    <source>
    </source>
</evidence>
<evidence type="ECO:0000269" key="11">
    <source>
    </source>
</evidence>
<evidence type="ECO:0000303" key="12">
    <source>
    </source>
</evidence>
<evidence type="ECO:0000303" key="13">
    <source>
    </source>
</evidence>
<evidence type="ECO:0000303" key="14">
    <source>
    </source>
</evidence>
<evidence type="ECO:0000303" key="15">
    <source>
    </source>
</evidence>
<evidence type="ECO:0000305" key="16"/>
<evidence type="ECO:0007744" key="17">
    <source>
    </source>
</evidence>
<evidence type="ECO:0007744" key="18">
    <source>
    </source>
</evidence>
<evidence type="ECO:0007829" key="19">
    <source>
        <dbReference type="PDB" id="1WJ1"/>
    </source>
</evidence>
<evidence type="ECO:0007829" key="20">
    <source>
        <dbReference type="PDB" id="5YQG"/>
    </source>
</evidence>
<name>NUMB_MOUSE</name>
<protein>
    <recommendedName>
        <fullName>Protein numb homolog</fullName>
        <shortName>m-Nb</shortName>
        <shortName>m-Numb</shortName>
    </recommendedName>
</protein>
<keyword id="KW-0002">3D-structure</keyword>
<keyword id="KW-0025">Alternative splicing</keyword>
<keyword id="KW-1003">Cell membrane</keyword>
<keyword id="KW-0217">Developmental protein</keyword>
<keyword id="KW-0967">Endosome</keyword>
<keyword id="KW-0472">Membrane</keyword>
<keyword id="KW-0524">Neurogenesis</keyword>
<keyword id="KW-0597">Phosphoprotein</keyword>
<keyword id="KW-1185">Reference proteome</keyword>
<keyword id="KW-0832">Ubl conjugation</keyword>
<proteinExistence type="evidence at protein level"/>
<reference key="1">
    <citation type="journal article" date="1996" name="Neuron">
        <title>Asymmetric localization of a mammalian numb homolog during mouse cortical neurogenesis.</title>
        <authorList>
            <person name="Zhong W."/>
            <person name="Feder J.N."/>
            <person name="Jiang M.-M."/>
            <person name="Jan L.Y."/>
            <person name="Jan Y.N."/>
        </authorList>
    </citation>
    <scope>NUCLEOTIDE SEQUENCE [MRNA] (ISOFORM 4)</scope>
</reference>
<reference key="2">
    <citation type="journal article" date="1999" name="J. Biol. Chem.">
        <title>Characterization of four mammalian Numb protein isoforms: Identification of cytoplasmic and membrane-associated variants of the phosphotyrosine binding domain.</title>
        <authorList>
            <person name="Dho S.E."/>
            <person name="French M.B."/>
            <person name="Woods S.A."/>
            <person name="McGlade C.J."/>
        </authorList>
    </citation>
    <scope>NUCLEOTIDE SEQUENCE [MRNA] (ISOFORMS 1; 2 AND 3)</scope>
</reference>
<reference key="3">
    <citation type="journal article" date="2005" name="Science">
        <title>The transcriptional landscape of the mammalian genome.</title>
        <authorList>
            <person name="Carninci P."/>
            <person name="Kasukawa T."/>
            <person name="Katayama S."/>
            <person name="Gough J."/>
            <person name="Frith M.C."/>
            <person name="Maeda N."/>
            <person name="Oyama R."/>
            <person name="Ravasi T."/>
            <person name="Lenhard B."/>
            <person name="Wells C."/>
            <person name="Kodzius R."/>
            <person name="Shimokawa K."/>
            <person name="Bajic V.B."/>
            <person name="Brenner S.E."/>
            <person name="Batalov S."/>
            <person name="Forrest A.R."/>
            <person name="Zavolan M."/>
            <person name="Davis M.J."/>
            <person name="Wilming L.G."/>
            <person name="Aidinis V."/>
            <person name="Allen J.E."/>
            <person name="Ambesi-Impiombato A."/>
            <person name="Apweiler R."/>
            <person name="Aturaliya R.N."/>
            <person name="Bailey T.L."/>
            <person name="Bansal M."/>
            <person name="Baxter L."/>
            <person name="Beisel K.W."/>
            <person name="Bersano T."/>
            <person name="Bono H."/>
            <person name="Chalk A.M."/>
            <person name="Chiu K.P."/>
            <person name="Choudhary V."/>
            <person name="Christoffels A."/>
            <person name="Clutterbuck D.R."/>
            <person name="Crowe M.L."/>
            <person name="Dalla E."/>
            <person name="Dalrymple B.P."/>
            <person name="de Bono B."/>
            <person name="Della Gatta G."/>
            <person name="di Bernardo D."/>
            <person name="Down T."/>
            <person name="Engstrom P."/>
            <person name="Fagiolini M."/>
            <person name="Faulkner G."/>
            <person name="Fletcher C.F."/>
            <person name="Fukushima T."/>
            <person name="Furuno M."/>
            <person name="Futaki S."/>
            <person name="Gariboldi M."/>
            <person name="Georgii-Hemming P."/>
            <person name="Gingeras T.R."/>
            <person name="Gojobori T."/>
            <person name="Green R.E."/>
            <person name="Gustincich S."/>
            <person name="Harbers M."/>
            <person name="Hayashi Y."/>
            <person name="Hensch T.K."/>
            <person name="Hirokawa N."/>
            <person name="Hill D."/>
            <person name="Huminiecki L."/>
            <person name="Iacono M."/>
            <person name="Ikeo K."/>
            <person name="Iwama A."/>
            <person name="Ishikawa T."/>
            <person name="Jakt M."/>
            <person name="Kanapin A."/>
            <person name="Katoh M."/>
            <person name="Kawasawa Y."/>
            <person name="Kelso J."/>
            <person name="Kitamura H."/>
            <person name="Kitano H."/>
            <person name="Kollias G."/>
            <person name="Krishnan S.P."/>
            <person name="Kruger A."/>
            <person name="Kummerfeld S.K."/>
            <person name="Kurochkin I.V."/>
            <person name="Lareau L.F."/>
            <person name="Lazarevic D."/>
            <person name="Lipovich L."/>
            <person name="Liu J."/>
            <person name="Liuni S."/>
            <person name="McWilliam S."/>
            <person name="Madan Babu M."/>
            <person name="Madera M."/>
            <person name="Marchionni L."/>
            <person name="Matsuda H."/>
            <person name="Matsuzawa S."/>
            <person name="Miki H."/>
            <person name="Mignone F."/>
            <person name="Miyake S."/>
            <person name="Morris K."/>
            <person name="Mottagui-Tabar S."/>
            <person name="Mulder N."/>
            <person name="Nakano N."/>
            <person name="Nakauchi H."/>
            <person name="Ng P."/>
            <person name="Nilsson R."/>
            <person name="Nishiguchi S."/>
            <person name="Nishikawa S."/>
            <person name="Nori F."/>
            <person name="Ohara O."/>
            <person name="Okazaki Y."/>
            <person name="Orlando V."/>
            <person name="Pang K.C."/>
            <person name="Pavan W.J."/>
            <person name="Pavesi G."/>
            <person name="Pesole G."/>
            <person name="Petrovsky N."/>
            <person name="Piazza S."/>
            <person name="Reed J."/>
            <person name="Reid J.F."/>
            <person name="Ring B.Z."/>
            <person name="Ringwald M."/>
            <person name="Rost B."/>
            <person name="Ruan Y."/>
            <person name="Salzberg S.L."/>
            <person name="Sandelin A."/>
            <person name="Schneider C."/>
            <person name="Schoenbach C."/>
            <person name="Sekiguchi K."/>
            <person name="Semple C.A."/>
            <person name="Seno S."/>
            <person name="Sessa L."/>
            <person name="Sheng Y."/>
            <person name="Shibata Y."/>
            <person name="Shimada H."/>
            <person name="Shimada K."/>
            <person name="Silva D."/>
            <person name="Sinclair B."/>
            <person name="Sperling S."/>
            <person name="Stupka E."/>
            <person name="Sugiura K."/>
            <person name="Sultana R."/>
            <person name="Takenaka Y."/>
            <person name="Taki K."/>
            <person name="Tammoja K."/>
            <person name="Tan S.L."/>
            <person name="Tang S."/>
            <person name="Taylor M.S."/>
            <person name="Tegner J."/>
            <person name="Teichmann S.A."/>
            <person name="Ueda H.R."/>
            <person name="van Nimwegen E."/>
            <person name="Verardo R."/>
            <person name="Wei C.L."/>
            <person name="Yagi K."/>
            <person name="Yamanishi H."/>
            <person name="Zabarovsky E."/>
            <person name="Zhu S."/>
            <person name="Zimmer A."/>
            <person name="Hide W."/>
            <person name="Bult C."/>
            <person name="Grimmond S.M."/>
            <person name="Teasdale R.D."/>
            <person name="Liu E.T."/>
            <person name="Brusic V."/>
            <person name="Quackenbush J."/>
            <person name="Wahlestedt C."/>
            <person name="Mattick J.S."/>
            <person name="Hume D.A."/>
            <person name="Kai C."/>
            <person name="Sasaki D."/>
            <person name="Tomaru Y."/>
            <person name="Fukuda S."/>
            <person name="Kanamori-Katayama M."/>
            <person name="Suzuki M."/>
            <person name="Aoki J."/>
            <person name="Arakawa T."/>
            <person name="Iida J."/>
            <person name="Imamura K."/>
            <person name="Itoh M."/>
            <person name="Kato T."/>
            <person name="Kawaji H."/>
            <person name="Kawagashira N."/>
            <person name="Kawashima T."/>
            <person name="Kojima M."/>
            <person name="Kondo S."/>
            <person name="Konno H."/>
            <person name="Nakano K."/>
            <person name="Ninomiya N."/>
            <person name="Nishio T."/>
            <person name="Okada M."/>
            <person name="Plessy C."/>
            <person name="Shibata K."/>
            <person name="Shiraki T."/>
            <person name="Suzuki S."/>
            <person name="Tagami M."/>
            <person name="Waki K."/>
            <person name="Watahiki A."/>
            <person name="Okamura-Oho Y."/>
            <person name="Suzuki H."/>
            <person name="Kawai J."/>
            <person name="Hayashizaki Y."/>
        </authorList>
    </citation>
    <scope>NUCLEOTIDE SEQUENCE [LARGE SCALE MRNA] (ISOFORM 4)</scope>
    <source>
        <strain>C57BL/6J</strain>
        <tissue>Lung</tissue>
    </source>
</reference>
<reference key="4">
    <citation type="journal article" date="2004" name="Genome Res.">
        <title>The status, quality, and expansion of the NIH full-length cDNA project: the Mammalian Gene Collection (MGC).</title>
        <authorList>
            <consortium name="The MGC Project Team"/>
        </authorList>
    </citation>
    <scope>NUCLEOTIDE SEQUENCE [LARGE SCALE MRNA] (ISOFORM 4)</scope>
    <source>
        <strain>Czech II</strain>
        <tissue>Lung</tissue>
    </source>
</reference>
<reference key="5">
    <citation type="journal article" date="1998" name="J. Biol. Chem.">
        <title>The mammalian numb phosphotyrosine-binding domain. Characterization of binding specificity and identification of a novel PDZ domain-containing numb binding protein, LNX.</title>
        <authorList>
            <person name="Dho S.E."/>
            <person name="Jacob S."/>
            <person name="Wolting C.D."/>
            <person name="French M.B."/>
            <person name="Rohrschneider L.R."/>
            <person name="McGlade C.J."/>
        </authorList>
    </citation>
    <scope>INTERACTION WITH LNX</scope>
</reference>
<reference key="6">
    <citation type="journal article" date="2000" name="Proc. Natl. Acad. Sci. U.S.A.">
        <title>Mouse numb is an essential gene involved in cortical neurogenesis.</title>
        <authorList>
            <person name="Zhong W."/>
            <person name="Jiang M.M."/>
            <person name="Schonemann M.D."/>
            <person name="Meneses J.J."/>
            <person name="Pedersen R.A."/>
            <person name="Jan L.Y."/>
            <person name="Jan Y.N."/>
        </authorList>
    </citation>
    <scope>FUNCTION</scope>
    <scope>DISRUPTION PHENOTYPE</scope>
    <scope>DEVELOPMENTAL STAGE</scope>
</reference>
<reference key="7">
    <citation type="journal article" date="2002" name="EMBO J.">
        <title>LNX functions as a RING type E3 ubiquitin ligase that targets the cell fate determinant Numb for ubiquitin-dependent degradation.</title>
        <authorList>
            <person name="Nie J."/>
            <person name="McGill M.A."/>
            <person name="Dermer M."/>
            <person name="Dho S.E."/>
            <person name="Wolting C.D."/>
            <person name="McGlade C.J."/>
        </authorList>
    </citation>
    <scope>UBIQUITINATION BY LNX</scope>
</reference>
<reference key="8">
    <citation type="journal article" date="2002" name="Nature">
        <title>Progenitor cell maintenance requires numb and numblike during mouse neurogenesis.</title>
        <authorList>
            <person name="Petersen P.H."/>
            <person name="Zou K."/>
            <person name="Hwang J.K."/>
            <person name="Jan Y.N."/>
            <person name="Zhong W."/>
        </authorList>
    </citation>
    <scope>FUNCTION</scope>
    <scope>DISRUPTION PHENOTYPE</scope>
    <scope>DEVELOPMENTAL STAGE</scope>
</reference>
<reference key="9">
    <citation type="journal article" date="2004" name="Nat. Neurosci.">
        <title>Continuing role for mouse Numb and Numbl in maintaining progenitor cells during cortical neurogenesis.</title>
        <authorList>
            <person name="Petersen P.H."/>
            <person name="Zou K."/>
            <person name="Krauss S."/>
            <person name="Zhong W."/>
        </authorList>
    </citation>
    <scope>FUNCTION</scope>
    <scope>DISRUPTION PHENOTYPE</scope>
    <scope>DEVELOPMENTAL STAGE</scope>
</reference>
<reference key="10">
    <citation type="journal article" date="2006" name="Cell">
        <title>Postnatal deletion of Numb/Numblike reveals repair and remodeling capacity in the subventricular neurogenic niche.</title>
        <authorList>
            <person name="Kuo C.T."/>
            <person name="Mirzadeh Z."/>
            <person name="Soriano-Navarro M."/>
            <person name="Rasin M."/>
            <person name="Wang D."/>
            <person name="Shen J."/>
            <person name="Sestan N."/>
            <person name="Garcia-Verdugo J."/>
            <person name="Alvarez-Buylla A."/>
            <person name="Jan L.Y."/>
            <person name="Jan Y.N."/>
        </authorList>
    </citation>
    <scope>FUNCTION</scope>
    <scope>INTERACTION WITH CDH1</scope>
    <scope>DISRUPTION PHENOTYPE</scope>
    <scope>TISSUE SPECIFICITY</scope>
</reference>
<reference key="11">
    <citation type="journal article" date="2007" name="Proc. Natl. Acad. Sci. U.S.A.">
        <title>Large-scale phosphorylation analysis of mouse liver.</title>
        <authorList>
            <person name="Villen J."/>
            <person name="Beausoleil S.A."/>
            <person name="Gerber S.A."/>
            <person name="Gygi S.P."/>
        </authorList>
    </citation>
    <scope>IDENTIFICATION BY MASS SPECTROMETRY [LARGE SCALE ANALYSIS]</scope>
    <source>
        <tissue>Liver</tissue>
    </source>
</reference>
<reference key="12">
    <citation type="journal article" date="2009" name="Immunity">
        <title>The phagosomal proteome in interferon-gamma-activated macrophages.</title>
        <authorList>
            <person name="Trost M."/>
            <person name="English L."/>
            <person name="Lemieux S."/>
            <person name="Courcelles M."/>
            <person name="Desjardins M."/>
            <person name="Thibault P."/>
        </authorList>
    </citation>
    <scope>PHOSPHORYLATION [LARGE SCALE ANALYSIS] AT THR-243 AND SER-244</scope>
    <scope>IDENTIFICATION BY MASS SPECTROMETRY [LARGE SCALE ANALYSIS]</scope>
</reference>
<reference key="13">
    <citation type="journal article" date="2010" name="Cell">
        <title>A tissue-specific atlas of mouse protein phosphorylation and expression.</title>
        <authorList>
            <person name="Huttlin E.L."/>
            <person name="Jedrychowski M.P."/>
            <person name="Elias J.E."/>
            <person name="Goswami T."/>
            <person name="Rad R."/>
            <person name="Beausoleil S.A."/>
            <person name="Villen J."/>
            <person name="Haas W."/>
            <person name="Sowa M.E."/>
            <person name="Gygi S.P."/>
        </authorList>
    </citation>
    <scope>PHOSPHORYLATION [LARGE SCALE ANALYSIS] AT SER-440</scope>
    <scope>IDENTIFICATION BY MASS SPECTROMETRY [LARGE SCALE ANALYSIS]</scope>
    <source>
        <tissue>Brain</tissue>
        <tissue>Heart</tissue>
        <tissue>Lung</tissue>
        <tissue>Testis</tissue>
    </source>
</reference>
<reference key="14">
    <citation type="submission" date="2004-11" db="PDB data bank">
        <title>Solution structure of phosphotyrosine interaction domain of mouse NUMB protein.</title>
        <authorList>
            <consortium name="RIKEN structural genomics initiative (RSGI)"/>
        </authorList>
    </citation>
    <scope>STRUCTURE BY NMR OF 19-172</scope>
</reference>
<dbReference type="EMBL" id="AF169191">
    <property type="protein sequence ID" value="AAD47834.1"/>
    <property type="molecule type" value="mRNA"/>
</dbReference>
<dbReference type="EMBL" id="AF169192">
    <property type="protein sequence ID" value="AAD47835.1"/>
    <property type="molecule type" value="mRNA"/>
</dbReference>
<dbReference type="EMBL" id="AF170709">
    <property type="protein sequence ID" value="AAD47836.1"/>
    <property type="molecule type" value="mRNA"/>
</dbReference>
<dbReference type="EMBL" id="AK004553">
    <property type="protein sequence ID" value="BAB23367.1"/>
    <property type="molecule type" value="mRNA"/>
</dbReference>
<dbReference type="EMBL" id="BC033459">
    <property type="protein sequence ID" value="AAH33459.1"/>
    <property type="molecule type" value="mRNA"/>
</dbReference>
<dbReference type="EMBL" id="U70674">
    <property type="protein sequence ID" value="AAB09586.1"/>
    <property type="molecule type" value="mRNA"/>
</dbReference>
<dbReference type="CCDS" id="CCDS26032.1">
    <molecule id="Q9QZS3-2"/>
</dbReference>
<dbReference type="CCDS" id="CCDS49108.1">
    <molecule id="Q9QZS3-1"/>
</dbReference>
<dbReference type="CCDS" id="CCDS70400.1">
    <molecule id="Q9QZS3-4"/>
</dbReference>
<dbReference type="CCDS" id="CCDS70401.1">
    <molecule id="Q9QZS3-3"/>
</dbReference>
<dbReference type="RefSeq" id="NP_001129547.1">
    <molecule id="Q9QZS3-1"/>
    <property type="nucleotide sequence ID" value="NM_001136075.3"/>
</dbReference>
<dbReference type="RefSeq" id="NP_001258984.1">
    <molecule id="Q9QZS3-3"/>
    <property type="nucleotide sequence ID" value="NM_001272055.2"/>
</dbReference>
<dbReference type="RefSeq" id="NP_001258985.1">
    <molecule id="Q9QZS3-4"/>
    <property type="nucleotide sequence ID" value="NM_001272056.1"/>
</dbReference>
<dbReference type="RefSeq" id="NP_001398878.1">
    <molecule id="Q9QZS3-1"/>
    <property type="nucleotide sequence ID" value="NM_001411949.1"/>
</dbReference>
<dbReference type="RefSeq" id="NP_001398879.1">
    <molecule id="Q9QZS3-2"/>
    <property type="nucleotide sequence ID" value="NM_001411950.1"/>
</dbReference>
<dbReference type="RefSeq" id="NP_001398880.1">
    <molecule id="Q9QZS3-4"/>
    <property type="nucleotide sequence ID" value="NM_001411951.1"/>
</dbReference>
<dbReference type="RefSeq" id="NP_001398881.1">
    <molecule id="Q9QZS3-3"/>
    <property type="nucleotide sequence ID" value="NM_001411952.1"/>
</dbReference>
<dbReference type="RefSeq" id="NP_035079.1">
    <molecule id="Q9QZS3-2"/>
    <property type="nucleotide sequence ID" value="NM_010949.3"/>
</dbReference>
<dbReference type="RefSeq" id="XP_006515639.1">
    <property type="nucleotide sequence ID" value="XM_006515576.1"/>
</dbReference>
<dbReference type="RefSeq" id="XP_006515640.1">
    <molecule id="Q9QZS3-1"/>
    <property type="nucleotide sequence ID" value="XM_006515577.4"/>
</dbReference>
<dbReference type="RefSeq" id="XP_006515641.1">
    <property type="nucleotide sequence ID" value="XM_006515578.1"/>
</dbReference>
<dbReference type="RefSeq" id="XP_011242314.1">
    <molecule id="Q9QZS3-1"/>
    <property type="nucleotide sequence ID" value="XM_011244012.3"/>
</dbReference>
<dbReference type="PDB" id="1WJ1">
    <property type="method" value="NMR"/>
    <property type="chains" value="A=19-172"/>
</dbReference>
<dbReference type="PDB" id="5YQG">
    <property type="method" value="X-ray"/>
    <property type="resolution" value="2.10 A"/>
    <property type="chains" value="E/F=271-301"/>
</dbReference>
<dbReference type="PDBsum" id="1WJ1"/>
<dbReference type="PDBsum" id="5YQG"/>
<dbReference type="SMR" id="Q9QZS3"/>
<dbReference type="BioGRID" id="201877">
    <property type="interactions" value="42"/>
</dbReference>
<dbReference type="CORUM" id="Q9QZS3"/>
<dbReference type="FunCoup" id="Q9QZS3">
    <property type="interactions" value="2232"/>
</dbReference>
<dbReference type="IntAct" id="Q9QZS3">
    <property type="interactions" value="21"/>
</dbReference>
<dbReference type="MINT" id="Q9QZS3"/>
<dbReference type="STRING" id="10090.ENSMUSP00000119303"/>
<dbReference type="GlyGen" id="Q9QZS3">
    <property type="glycosylation" value="2 sites"/>
</dbReference>
<dbReference type="iPTMnet" id="Q9QZS3"/>
<dbReference type="PhosphoSitePlus" id="Q9QZS3"/>
<dbReference type="jPOST" id="Q9QZS3"/>
<dbReference type="PaxDb" id="10090-ENSMUSP00000119303"/>
<dbReference type="PeptideAtlas" id="Q9QZS3"/>
<dbReference type="ProteomicsDB" id="295466">
    <molecule id="Q9QZS3-1"/>
</dbReference>
<dbReference type="ProteomicsDB" id="295467">
    <molecule id="Q9QZS3-2"/>
</dbReference>
<dbReference type="ProteomicsDB" id="295468">
    <molecule id="Q9QZS3-3"/>
</dbReference>
<dbReference type="ProteomicsDB" id="295469">
    <molecule id="Q9QZS3-4"/>
</dbReference>
<dbReference type="Pumba" id="Q9QZS3"/>
<dbReference type="Antibodypedia" id="131">
    <property type="antibodies" value="912 antibodies from 43 providers"/>
</dbReference>
<dbReference type="DNASU" id="18222"/>
<dbReference type="Ensembl" id="ENSMUST00000021647.14">
    <molecule id="Q9QZS3-2"/>
    <property type="protein sequence ID" value="ENSMUSP00000021647.8"/>
    <property type="gene ID" value="ENSMUSG00000021224.16"/>
</dbReference>
<dbReference type="Ensembl" id="ENSMUST00000117217.8">
    <molecule id="Q9QZS3-4"/>
    <property type="protein sequence ID" value="ENSMUSP00000113591.2"/>
    <property type="gene ID" value="ENSMUSG00000021224.16"/>
</dbReference>
<dbReference type="Ensembl" id="ENSMUST00000129335.8">
    <molecule id="Q9QZS3-1"/>
    <property type="protein sequence ID" value="ENSMUSP00000119303.2"/>
    <property type="gene ID" value="ENSMUSG00000021224.16"/>
</dbReference>
<dbReference type="Ensembl" id="ENSMUST00000154043.8">
    <molecule id="Q9QZS3-3"/>
    <property type="protein sequence ID" value="ENSMUSP00000117899.2"/>
    <property type="gene ID" value="ENSMUSG00000021224.16"/>
</dbReference>
<dbReference type="GeneID" id="18222"/>
<dbReference type="KEGG" id="mmu:18222"/>
<dbReference type="UCSC" id="uc007odu.2">
    <molecule id="Q9QZS3-2"/>
    <property type="organism name" value="mouse"/>
</dbReference>
<dbReference type="UCSC" id="uc007odv.2">
    <molecule id="Q9QZS3-1"/>
    <property type="organism name" value="mouse"/>
</dbReference>
<dbReference type="UCSC" id="uc007odw.2">
    <molecule id="Q9QZS3-3"/>
    <property type="organism name" value="mouse"/>
</dbReference>
<dbReference type="UCSC" id="uc007ody.2">
    <molecule id="Q9QZS3-4"/>
    <property type="organism name" value="mouse"/>
</dbReference>
<dbReference type="AGR" id="MGI:107423"/>
<dbReference type="CTD" id="8650"/>
<dbReference type="MGI" id="MGI:107423">
    <property type="gene designation" value="Numb"/>
</dbReference>
<dbReference type="VEuPathDB" id="HostDB:ENSMUSG00000021224"/>
<dbReference type="eggNOG" id="KOG3537">
    <property type="taxonomic scope" value="Eukaryota"/>
</dbReference>
<dbReference type="GeneTree" id="ENSGT00940000156005"/>
<dbReference type="HOGENOM" id="CLU_031797_1_1_1"/>
<dbReference type="InParanoid" id="Q9QZS3"/>
<dbReference type="OMA" id="GMSYPAP"/>
<dbReference type="OrthoDB" id="10070446at2759"/>
<dbReference type="PhylomeDB" id="Q9QZS3"/>
<dbReference type="TreeFam" id="TF314159"/>
<dbReference type="Reactome" id="R-MMU-437239">
    <property type="pathway name" value="Recycling pathway of L1"/>
</dbReference>
<dbReference type="Reactome" id="R-MMU-5610780">
    <property type="pathway name" value="Degradation of GLI1 by the proteasome"/>
</dbReference>
<dbReference type="Reactome" id="R-MMU-5632684">
    <property type="pathway name" value="Hedgehog 'on' state"/>
</dbReference>
<dbReference type="BioGRID-ORCS" id="18222">
    <property type="hits" value="4 hits in 78 CRISPR screens"/>
</dbReference>
<dbReference type="CD-CODE" id="CE726F99">
    <property type="entry name" value="Postsynaptic density"/>
</dbReference>
<dbReference type="ChiTaRS" id="Numb">
    <property type="organism name" value="mouse"/>
</dbReference>
<dbReference type="EvolutionaryTrace" id="Q9QZS3"/>
<dbReference type="PRO" id="PR:Q9QZS3"/>
<dbReference type="Proteomes" id="UP000000589">
    <property type="component" value="Chromosome 12"/>
</dbReference>
<dbReference type="RNAct" id="Q9QZS3">
    <property type="molecule type" value="protein"/>
</dbReference>
<dbReference type="Bgee" id="ENSMUSG00000021224">
    <property type="expression patterns" value="Expressed in metanephric ureteric bud and 269 other cell types or tissues"/>
</dbReference>
<dbReference type="ExpressionAtlas" id="Q9QZS3">
    <property type="expression patterns" value="baseline and differential"/>
</dbReference>
<dbReference type="GO" id="GO:0045177">
    <property type="term" value="C:apical part of cell"/>
    <property type="evidence" value="ECO:0000314"/>
    <property type="project" value="MGI"/>
</dbReference>
<dbReference type="GO" id="GO:0016323">
    <property type="term" value="C:basolateral plasma membrane"/>
    <property type="evidence" value="ECO:0000314"/>
    <property type="project" value="MGI"/>
</dbReference>
<dbReference type="GO" id="GO:0005905">
    <property type="term" value="C:clathrin-coated pit"/>
    <property type="evidence" value="ECO:0000314"/>
    <property type="project" value="MGI"/>
</dbReference>
<dbReference type="GO" id="GO:0030136">
    <property type="term" value="C:clathrin-coated vesicle"/>
    <property type="evidence" value="ECO:0007669"/>
    <property type="project" value="Ensembl"/>
</dbReference>
<dbReference type="GO" id="GO:0005737">
    <property type="term" value="C:cytoplasm"/>
    <property type="evidence" value="ECO:0000314"/>
    <property type="project" value="MGI"/>
</dbReference>
<dbReference type="GO" id="GO:0031410">
    <property type="term" value="C:cytoplasmic vesicle"/>
    <property type="evidence" value="ECO:0000314"/>
    <property type="project" value="BHF-UCL"/>
</dbReference>
<dbReference type="GO" id="GO:0005769">
    <property type="term" value="C:early endosome"/>
    <property type="evidence" value="ECO:0000314"/>
    <property type="project" value="MGI"/>
</dbReference>
<dbReference type="GO" id="GO:0010008">
    <property type="term" value="C:endosome membrane"/>
    <property type="evidence" value="ECO:0007669"/>
    <property type="project" value="UniProtKB-SubCell"/>
</dbReference>
<dbReference type="GO" id="GO:0098978">
    <property type="term" value="C:glutamatergic synapse"/>
    <property type="evidence" value="ECO:0000314"/>
    <property type="project" value="SynGO"/>
</dbReference>
<dbReference type="GO" id="GO:0005634">
    <property type="term" value="C:nucleus"/>
    <property type="evidence" value="ECO:0000314"/>
    <property type="project" value="MGI"/>
</dbReference>
<dbReference type="GO" id="GO:0005886">
    <property type="term" value="C:plasma membrane"/>
    <property type="evidence" value="ECO:0000314"/>
    <property type="project" value="MGI"/>
</dbReference>
<dbReference type="GO" id="GO:0045294">
    <property type="term" value="F:alpha-catenin binding"/>
    <property type="evidence" value="ECO:0000353"/>
    <property type="project" value="MGI"/>
</dbReference>
<dbReference type="GO" id="GO:0008013">
    <property type="term" value="F:beta-catenin binding"/>
    <property type="evidence" value="ECO:0000353"/>
    <property type="project" value="MGI"/>
</dbReference>
<dbReference type="GO" id="GO:0045296">
    <property type="term" value="F:cadherin binding"/>
    <property type="evidence" value="ECO:0000353"/>
    <property type="project" value="MGI"/>
</dbReference>
<dbReference type="GO" id="GO:0005543">
    <property type="term" value="F:phospholipid binding"/>
    <property type="evidence" value="ECO:0000314"/>
    <property type="project" value="MGI"/>
</dbReference>
<dbReference type="GO" id="GO:0034332">
    <property type="term" value="P:adherens junction organization"/>
    <property type="evidence" value="ECO:0000316"/>
    <property type="project" value="MGI"/>
</dbReference>
<dbReference type="GO" id="GO:0007409">
    <property type="term" value="P:axonogenesis"/>
    <property type="evidence" value="ECO:0000314"/>
    <property type="project" value="MGI"/>
</dbReference>
<dbReference type="GO" id="GO:0030900">
    <property type="term" value="P:forebrain development"/>
    <property type="evidence" value="ECO:0000315"/>
    <property type="project" value="MGI"/>
</dbReference>
<dbReference type="GO" id="GO:0021670">
    <property type="term" value="P:lateral ventricle development"/>
    <property type="evidence" value="ECO:0000315"/>
    <property type="project" value="UniProtKB"/>
</dbReference>
<dbReference type="GO" id="GO:1903077">
    <property type="term" value="P:negative regulation of protein localization to plasma membrane"/>
    <property type="evidence" value="ECO:0007669"/>
    <property type="project" value="Ensembl"/>
</dbReference>
<dbReference type="GO" id="GO:0007399">
    <property type="term" value="P:nervous system development"/>
    <property type="evidence" value="ECO:0000315"/>
    <property type="project" value="MGI"/>
</dbReference>
<dbReference type="GO" id="GO:0021849">
    <property type="term" value="P:neuroblast division in subventricular zone"/>
    <property type="evidence" value="ECO:0000315"/>
    <property type="project" value="UniProtKB"/>
</dbReference>
<dbReference type="GO" id="GO:0007405">
    <property type="term" value="P:neuroblast proliferation"/>
    <property type="evidence" value="ECO:0000316"/>
    <property type="project" value="MGI"/>
</dbReference>
<dbReference type="GO" id="GO:0030335">
    <property type="term" value="P:positive regulation of cell migration"/>
    <property type="evidence" value="ECO:0007669"/>
    <property type="project" value="Ensembl"/>
</dbReference>
<dbReference type="GO" id="GO:0050769">
    <property type="term" value="P:positive regulation of neurogenesis"/>
    <property type="evidence" value="ECO:0000315"/>
    <property type="project" value="UniProtKB"/>
</dbReference>
<dbReference type="GO" id="GO:0099149">
    <property type="term" value="P:regulation of postsynaptic neurotransmitter receptor internalization"/>
    <property type="evidence" value="ECO:0000314"/>
    <property type="project" value="SynGO"/>
</dbReference>
<dbReference type="CDD" id="cd01268">
    <property type="entry name" value="PTB_Numb"/>
    <property type="match status" value="1"/>
</dbReference>
<dbReference type="FunFam" id="2.30.29.30:FF:000031">
    <property type="entry name" value="protein numb isoform X1"/>
    <property type="match status" value="1"/>
</dbReference>
<dbReference type="Gene3D" id="2.30.29.30">
    <property type="entry name" value="Pleckstrin-homology domain (PH domain)/Phosphotyrosine-binding domain (PTB)"/>
    <property type="match status" value="1"/>
</dbReference>
<dbReference type="InterPro" id="IPR016698">
    <property type="entry name" value="Numb/numb-like"/>
</dbReference>
<dbReference type="InterPro" id="IPR010449">
    <property type="entry name" value="Numb_domain"/>
</dbReference>
<dbReference type="InterPro" id="IPR011993">
    <property type="entry name" value="PH-like_dom_sf"/>
</dbReference>
<dbReference type="InterPro" id="IPR006020">
    <property type="entry name" value="PTB/PI_dom"/>
</dbReference>
<dbReference type="PANTHER" id="PTHR47368">
    <property type="entry name" value="NUMB"/>
    <property type="match status" value="1"/>
</dbReference>
<dbReference type="PANTHER" id="PTHR47368:SF5">
    <property type="entry name" value="PROTEIN NUMB HOMOLOG"/>
    <property type="match status" value="1"/>
</dbReference>
<dbReference type="Pfam" id="PF06311">
    <property type="entry name" value="NumbF"/>
    <property type="match status" value="1"/>
</dbReference>
<dbReference type="Pfam" id="PF00640">
    <property type="entry name" value="PID"/>
    <property type="match status" value="1"/>
</dbReference>
<dbReference type="PIRSF" id="PIRSF017607">
    <property type="entry name" value="Numb/numb-like"/>
    <property type="match status" value="1"/>
</dbReference>
<dbReference type="SMART" id="SM00462">
    <property type="entry name" value="PTB"/>
    <property type="match status" value="1"/>
</dbReference>
<dbReference type="SUPFAM" id="SSF50729">
    <property type="entry name" value="PH domain-like"/>
    <property type="match status" value="1"/>
</dbReference>
<dbReference type="PROSITE" id="PS01179">
    <property type="entry name" value="PID"/>
    <property type="match status" value="1"/>
</dbReference>
<accession>Q9QZS3</accession>
<accession>P70422</accession>
<accession>Q8CIB1</accession>
<accession>Q9DC57</accession>
<accession>Q9QZR1</accession>
<accession>Q9QZS4</accession>
<organism>
    <name type="scientific">Mus musculus</name>
    <name type="common">Mouse</name>
    <dbReference type="NCBI Taxonomy" id="10090"/>
    <lineage>
        <taxon>Eukaryota</taxon>
        <taxon>Metazoa</taxon>
        <taxon>Chordata</taxon>
        <taxon>Craniata</taxon>
        <taxon>Vertebrata</taxon>
        <taxon>Euteleostomi</taxon>
        <taxon>Mammalia</taxon>
        <taxon>Eutheria</taxon>
        <taxon>Euarchontoglires</taxon>
        <taxon>Glires</taxon>
        <taxon>Rodentia</taxon>
        <taxon>Myomorpha</taxon>
        <taxon>Muroidea</taxon>
        <taxon>Muridae</taxon>
        <taxon>Murinae</taxon>
        <taxon>Mus</taxon>
        <taxon>Mus</taxon>
    </lineage>
</organism>
<comment type="function">
    <text evidence="2 6 8 9 10">Regulates clathrin-mediated receptor endocytosis (By similarity). Plays a role in the process of neurogenesis (PubMed:10841580, PubMed:12410312, PubMed:15273690, PubMed:17174898). Required throughout embryonic neurogenesis to maintain neural progenitor cells, also called radial glial cells (RGCs), by allowing their daughter cells to choose progenitor over neuronal cell fate (PubMed:12410312, PubMed:15273690). Not required for the proliferation of neural progenitor cells before the onset of neurogenesis (PubMed:12410312, PubMed:15273690). Also involved postnatally in the subventricular zone (SVZ) neurogenesis by regulating SVZ neuroblasts survival and ependymal wall integrity (PubMed:17174898). May also mediate local repair of brain ventricular wall damage (PubMed:17174898).</text>
</comment>
<comment type="subunit">
    <text evidence="2 10 11">Interacts with SIAH1 (By similarity). Interacts with LNX (PubMed:9535908). Interacts with CDH1 (PubMed:17174898). Interacts with TFAP2A and TFAP2B (By similarity). Interacts with RALBP1 in a complex also containing EPN1 and TFAP2A during interphase and mitosis (By similarity). Interacts with AAK1 (By similarity). May interact with DUOXA1 (By similarity).</text>
</comment>
<comment type="interaction">
    <interactant intactId="EBI-9547433">
        <id>Q9QZS3-1</id>
    </interactant>
    <interactant intactId="EBI-396684">
        <id>P42566</id>
        <label>EPS15</label>
    </interactant>
    <organismsDiffer>true</organismsDiffer>
    <experiments>3</experiments>
</comment>
<comment type="interaction">
    <interactant intactId="EBI-9547433">
        <id>Q9QZS3-1</id>
    </interactant>
    <interactant intactId="EBI-1171195">
        <id>Q96D71</id>
        <label>REPS1</label>
    </interactant>
    <organismsDiffer>true</organismsDiffer>
    <experiments>3</experiments>
</comment>
<comment type="interaction">
    <interactant intactId="EBI-3896014">
        <id>Q9QZS3-2</id>
    </interactant>
    <interactant intactId="EBI-396684">
        <id>P42566</id>
        <label>EPS15</label>
    </interactant>
    <organismsDiffer>true</organismsDiffer>
    <experiments>3</experiments>
</comment>
<comment type="interaction">
    <interactant intactId="EBI-3896014">
        <id>Q9QZS3-2</id>
    </interactant>
    <interactant intactId="EBI-308084">
        <id>P08151</id>
        <label>GLI1</label>
    </interactant>
    <organismsDiffer>true</organismsDiffer>
    <experiments>4</experiments>
</comment>
<comment type="interaction">
    <interactant intactId="EBI-3896014">
        <id>Q9QZS3-2</id>
    </interactant>
    <interactant intactId="EBI-1564678">
        <id>Q96J02</id>
        <label>ITCH</label>
    </interactant>
    <organismsDiffer>true</organismsDiffer>
    <experiments>2</experiments>
</comment>
<comment type="interaction">
    <interactant intactId="EBI-3896014">
        <id>Q9QZS3-2</id>
    </interactant>
    <interactant intactId="EBI-1171195">
        <id>Q96D71</id>
        <label>REPS1</label>
    </interactant>
    <organismsDiffer>true</organismsDiffer>
    <experiments>2</experiments>
</comment>
<comment type="subcellular location">
    <subcellularLocation>
        <location evidence="2">Cell membrane</location>
        <topology evidence="2">Peripheral membrane protein</topology>
        <orientation evidence="2">Cytoplasmic side</orientation>
    </subcellularLocation>
    <subcellularLocation>
        <location evidence="2">Endosome membrane</location>
        <topology evidence="2">Peripheral membrane protein</topology>
        <orientation evidence="2">Cytoplasmic side</orientation>
    </subcellularLocation>
    <text evidence="2">Localizes to perinuclear endosomes in an AAK1-dependent manner.</text>
</comment>
<comment type="alternative products">
    <event type="alternative splicing"/>
    <isoform>
        <id>Q9QZS3-1</id>
        <name>1</name>
        <name>p72</name>
        <name>72 kDa</name>
        <sequence type="displayed"/>
    </isoform>
    <isoform>
        <id>Q9QZS3-2</id>
        <name>2</name>
        <name>p66</name>
        <name>66 kDa</name>
        <sequence type="described" ref="VSP_004351"/>
    </isoform>
    <isoform>
        <id>Q9QZS3-3</id>
        <name>3</name>
        <name>p71</name>
        <name>71 kDa</name>
        <sequence type="described" ref="VSP_004350"/>
    </isoform>
    <isoform>
        <id>Q9QZS3-4</id>
        <name>4</name>
        <name>p65</name>
        <name>65 kDa</name>
        <sequence type="described" ref="VSP_004350 VSP_004351"/>
    </isoform>
</comment>
<comment type="tissue specificity">
    <text evidence="10">Expressed in subventricular zone (SVZ) neuroprogenitors and ependymal cells.</text>
</comment>
<comment type="developmental stage">
    <text evidence="6 8 9">Expressed in neural progenitors and neuron cells throughout the developing nervous system. Expressed in somites and throughout the neural tube from 8.5 dpc, onward.</text>
</comment>
<comment type="PTM">
    <text evidence="1">Phosphorylated on Ser-276 and Ser-295 by CaMK1.</text>
</comment>
<comment type="PTM">
    <text evidence="1 7">Ubiquitinated; mediated by SIAH1 and leading to its subsequent proteasomal degradation (By similarity) Isoform 1 and isoform 2 are ubiquitinated by LNX leading to their subsequent proteasomal degradation.</text>
</comment>
<comment type="disruption phenotype">
    <text evidence="6 8 9 10">Mutant animals exhibit severe defects in cranial neuronal tube closure and die around 11.5 dpc, but neurogenesis abnormalities are limited. Mice lacking both Numb and Numbl genes die around 9.5 dpc, with severe defects in somite and vasculature formation, neuronal tube closure and axial turning. Conditional mutants, with expression abrogated in neural progenitor cells from 8.5 dpc are viable, fertile and exhibit no obvious phenotypes. Conditional double-knockout (cdKO) mutants (Numb and Numbl genes), with expression abrogated in neural progenitor cells from 8.5 dpc (just before the onset of neurogenesis), display a loss of neuronal progenitor cells formation and an overexpression of neurons as neurogenesis progresses; cdKO mutants become necrotic at 12.5 dpc and die around this stage. Conditional double-knockout (cdKO) mutants (Numb and Numbl genes), with expression abrogated in neural progenitor cells from 10.5 dpc (just after the onset of neurogenesis), display a premature depletion of neural progenitor cells in the dorsal forebrain ventrical zone of the neocortex and in the hippocampal CA fields as neurogenesis progresses; cdKO mutants are viable and fertile, but showed a reduction in the thickness of the neocortex and the hippocampus and a enlargement of the lateral ventricles. Tamoxifen-inducible double-knockout (cdKO) mutants (Numb and Numbl genes), with expression abrogated postnatally in the subventricular zone (SVZ) neuroprogenitors and in ependymal cells, display a loss of SVZ neuroblasts and show a disorganized ependyma lacking both interdigitation junction between neighboring cells and increasing number of separated cells.</text>
</comment>